<feature type="chain" id="PRO_0000261373" description="Galactose/methyl galactoside import ATP-binding protein MglA">
    <location>
        <begin position="1"/>
        <end position="506"/>
    </location>
</feature>
<feature type="domain" description="ABC transporter 1" evidence="1">
    <location>
        <begin position="14"/>
        <end position="249"/>
    </location>
</feature>
<feature type="domain" description="ABC transporter 2" evidence="1">
    <location>
        <begin position="264"/>
        <end position="506"/>
    </location>
</feature>
<feature type="binding site" evidence="1">
    <location>
        <begin position="46"/>
        <end position="53"/>
    </location>
    <ligand>
        <name>ATP</name>
        <dbReference type="ChEBI" id="CHEBI:30616"/>
    </ligand>
</feature>
<dbReference type="EC" id="7.5.2.11" evidence="1"/>
<dbReference type="EMBL" id="CP000036">
    <property type="protein sequence ID" value="ABB66751.1"/>
    <property type="molecule type" value="Genomic_DNA"/>
</dbReference>
<dbReference type="RefSeq" id="WP_000255052.1">
    <property type="nucleotide sequence ID" value="NC_007613.1"/>
</dbReference>
<dbReference type="SMR" id="Q31YV7"/>
<dbReference type="KEGG" id="sbo:SBO_2178"/>
<dbReference type="HOGENOM" id="CLU_000604_92_3_6"/>
<dbReference type="Proteomes" id="UP000007067">
    <property type="component" value="Chromosome"/>
</dbReference>
<dbReference type="GO" id="GO:0005886">
    <property type="term" value="C:plasma membrane"/>
    <property type="evidence" value="ECO:0007669"/>
    <property type="project" value="UniProtKB-SubCell"/>
</dbReference>
<dbReference type="GO" id="GO:0005524">
    <property type="term" value="F:ATP binding"/>
    <property type="evidence" value="ECO:0007669"/>
    <property type="project" value="UniProtKB-KW"/>
</dbReference>
<dbReference type="GO" id="GO:0016887">
    <property type="term" value="F:ATP hydrolysis activity"/>
    <property type="evidence" value="ECO:0007669"/>
    <property type="project" value="InterPro"/>
</dbReference>
<dbReference type="CDD" id="cd03216">
    <property type="entry name" value="ABC_Carb_Monos_I"/>
    <property type="match status" value="1"/>
</dbReference>
<dbReference type="CDD" id="cd03215">
    <property type="entry name" value="ABC_Carb_Monos_II"/>
    <property type="match status" value="1"/>
</dbReference>
<dbReference type="FunFam" id="3.40.50.300:FF:000126">
    <property type="entry name" value="Galactose/methyl galactoside import ATP-binding protein MglA"/>
    <property type="match status" value="1"/>
</dbReference>
<dbReference type="FunFam" id="3.40.50.300:FF:000127">
    <property type="entry name" value="Ribose import ATP-binding protein RbsA"/>
    <property type="match status" value="1"/>
</dbReference>
<dbReference type="Gene3D" id="3.40.50.300">
    <property type="entry name" value="P-loop containing nucleotide triphosphate hydrolases"/>
    <property type="match status" value="2"/>
</dbReference>
<dbReference type="InterPro" id="IPR003593">
    <property type="entry name" value="AAA+_ATPase"/>
</dbReference>
<dbReference type="InterPro" id="IPR050107">
    <property type="entry name" value="ABC_carbohydrate_import_ATPase"/>
</dbReference>
<dbReference type="InterPro" id="IPR003439">
    <property type="entry name" value="ABC_transporter-like_ATP-bd"/>
</dbReference>
<dbReference type="InterPro" id="IPR017871">
    <property type="entry name" value="ABC_transporter-like_CS"/>
</dbReference>
<dbReference type="InterPro" id="IPR027417">
    <property type="entry name" value="P-loop_NTPase"/>
</dbReference>
<dbReference type="NCBIfam" id="NF008215">
    <property type="entry name" value="PRK10982.1"/>
    <property type="match status" value="1"/>
</dbReference>
<dbReference type="PANTHER" id="PTHR43790">
    <property type="entry name" value="CARBOHYDRATE TRANSPORT ATP-BINDING PROTEIN MG119-RELATED"/>
    <property type="match status" value="1"/>
</dbReference>
<dbReference type="PANTHER" id="PTHR43790:SF7">
    <property type="entry name" value="GALACTOSE_METHYL GALACTOSIDE IMPORT ATP-BINDING PROTEIN MGLA"/>
    <property type="match status" value="1"/>
</dbReference>
<dbReference type="Pfam" id="PF00005">
    <property type="entry name" value="ABC_tran"/>
    <property type="match status" value="2"/>
</dbReference>
<dbReference type="SMART" id="SM00382">
    <property type="entry name" value="AAA"/>
    <property type="match status" value="2"/>
</dbReference>
<dbReference type="SUPFAM" id="SSF52540">
    <property type="entry name" value="P-loop containing nucleoside triphosphate hydrolases"/>
    <property type="match status" value="2"/>
</dbReference>
<dbReference type="PROSITE" id="PS00211">
    <property type="entry name" value="ABC_TRANSPORTER_1"/>
    <property type="match status" value="1"/>
</dbReference>
<dbReference type="PROSITE" id="PS50893">
    <property type="entry name" value="ABC_TRANSPORTER_2"/>
    <property type="match status" value="2"/>
</dbReference>
<dbReference type="PROSITE" id="PS51260">
    <property type="entry name" value="MGLA"/>
    <property type="match status" value="1"/>
</dbReference>
<comment type="function">
    <text evidence="1">Part of the ABC transporter complex MglABC involved in galactose/methyl galactoside import. Responsible for energy coupling to the transport system.</text>
</comment>
<comment type="catalytic activity">
    <reaction evidence="1">
        <text>D-galactose(out) + ATP + H2O = D-galactose(in) + ADP + phosphate + H(+)</text>
        <dbReference type="Rhea" id="RHEA:60156"/>
        <dbReference type="ChEBI" id="CHEBI:4139"/>
        <dbReference type="ChEBI" id="CHEBI:15377"/>
        <dbReference type="ChEBI" id="CHEBI:15378"/>
        <dbReference type="ChEBI" id="CHEBI:30616"/>
        <dbReference type="ChEBI" id="CHEBI:43474"/>
        <dbReference type="ChEBI" id="CHEBI:456216"/>
        <dbReference type="EC" id="7.5.2.11"/>
    </reaction>
    <physiologicalReaction direction="left-to-right" evidence="1">
        <dbReference type="Rhea" id="RHEA:60157"/>
    </physiologicalReaction>
</comment>
<comment type="catalytic activity">
    <reaction evidence="1">
        <text>methyl beta-D-galactoside(out) + ATP + H2O = methyl beta-D-galactoside(in) + ADP + phosphate + H(+)</text>
        <dbReference type="Rhea" id="RHEA:72531"/>
        <dbReference type="ChEBI" id="CHEBI:15377"/>
        <dbReference type="ChEBI" id="CHEBI:15378"/>
        <dbReference type="ChEBI" id="CHEBI:17540"/>
        <dbReference type="ChEBI" id="CHEBI:30616"/>
        <dbReference type="ChEBI" id="CHEBI:43474"/>
        <dbReference type="ChEBI" id="CHEBI:456216"/>
    </reaction>
    <physiologicalReaction direction="left-to-right" evidence="1">
        <dbReference type="Rhea" id="RHEA:72532"/>
    </physiologicalReaction>
</comment>
<comment type="subunit">
    <text evidence="1">The complex is composed of one ATP-binding protein (MglA), two transmembrane proteins (MglC) and a solute-binding protein (MglB).</text>
</comment>
<comment type="subcellular location">
    <subcellularLocation>
        <location evidence="1">Cell inner membrane</location>
        <topology evidence="1">Peripheral membrane protein</topology>
    </subcellularLocation>
</comment>
<comment type="similarity">
    <text evidence="1">Belongs to the ABC transporter superfamily. Galactose/methyl galactoside importer (TC 3.A.1.2.3) family.</text>
</comment>
<gene>
    <name evidence="1" type="primary">mglA</name>
    <name type="ordered locus">SBO_2178</name>
</gene>
<keyword id="KW-0067">ATP-binding</keyword>
<keyword id="KW-0997">Cell inner membrane</keyword>
<keyword id="KW-1003">Cell membrane</keyword>
<keyword id="KW-0472">Membrane</keyword>
<keyword id="KW-0547">Nucleotide-binding</keyword>
<keyword id="KW-0677">Repeat</keyword>
<keyword id="KW-0762">Sugar transport</keyword>
<keyword id="KW-1278">Translocase</keyword>
<keyword id="KW-0813">Transport</keyword>
<evidence type="ECO:0000255" key="1">
    <source>
        <dbReference type="HAMAP-Rule" id="MF_01717"/>
    </source>
</evidence>
<reference key="1">
    <citation type="journal article" date="2005" name="Nucleic Acids Res.">
        <title>Genome dynamics and diversity of Shigella species, the etiologic agents of bacillary dysentery.</title>
        <authorList>
            <person name="Yang F."/>
            <person name="Yang J."/>
            <person name="Zhang X."/>
            <person name="Chen L."/>
            <person name="Jiang Y."/>
            <person name="Yan Y."/>
            <person name="Tang X."/>
            <person name="Wang J."/>
            <person name="Xiong Z."/>
            <person name="Dong J."/>
            <person name="Xue Y."/>
            <person name="Zhu Y."/>
            <person name="Xu X."/>
            <person name="Sun L."/>
            <person name="Chen S."/>
            <person name="Nie H."/>
            <person name="Peng J."/>
            <person name="Xu J."/>
            <person name="Wang Y."/>
            <person name="Yuan Z."/>
            <person name="Wen Y."/>
            <person name="Yao Z."/>
            <person name="Shen Y."/>
            <person name="Qiang B."/>
            <person name="Hou Y."/>
            <person name="Yu J."/>
            <person name="Jin Q."/>
        </authorList>
    </citation>
    <scope>NUCLEOTIDE SEQUENCE [LARGE SCALE GENOMIC DNA]</scope>
    <source>
        <strain>Sb227</strain>
    </source>
</reference>
<organism>
    <name type="scientific">Shigella boydii serotype 4 (strain Sb227)</name>
    <dbReference type="NCBI Taxonomy" id="300268"/>
    <lineage>
        <taxon>Bacteria</taxon>
        <taxon>Pseudomonadati</taxon>
        <taxon>Pseudomonadota</taxon>
        <taxon>Gammaproteobacteria</taxon>
        <taxon>Enterobacterales</taxon>
        <taxon>Enterobacteriaceae</taxon>
        <taxon>Shigella</taxon>
    </lineage>
</organism>
<protein>
    <recommendedName>
        <fullName evidence="1">Galactose/methyl galactoside import ATP-binding protein MglA</fullName>
        <ecNumber evidence="1">7.5.2.11</ecNumber>
    </recommendedName>
</protein>
<proteinExistence type="inferred from homology"/>
<name>MGLA_SHIBS</name>
<accession>Q31YV7</accession>
<sequence>MVSSTTPSSGEYLLEMSGINKSFPGVKALDNVNLKVRPHSIHALMGENGAGKSTLLKCLFGIYQKDSGTILFQGKEIDFHSAKEALENGISMVHQELNLVLQRSVMDNMWLRRYPTKGMFVDQDKMYRETKAIFDELDIDIDPRARVGTLSVSQMQMIEIAKAFSYNAKIVIMDEPTSSLTEKEVNHLFTIIRKLKERGCGIVYISHKMEEIFQLCDEVTVLRDGQWIATEPLAGLTMDKIIAMMVGRSLNQRFPDKENKPGEVILEVRNLTSLRQPSIRDVSFDLHKGEILGIAGLVGAKRTDIVETLFGIREKSAGTITLHGKQINNHNANEAINHGFALVTEERRSTGIYAYLDIGFNSLISNIRNYKNKVGLLDKSRMKSDTQWVIDSMRVKTPGHRTQIGSLSGGNQQKVIIGRWLLTQPEILMLDEPTRGIDVGAKFEIYQLIAELAKKGKGIIIISSEMPELLGITDRILVMSNGLVSGIVDTKTTTQNEILRLASLHL</sequence>